<evidence type="ECO:0000255" key="1">
    <source>
        <dbReference type="HAMAP-Rule" id="MF_00082"/>
    </source>
</evidence>
<name>ARGB_METM6</name>
<comment type="function">
    <text evidence="1">Catalyzes the ATP-dependent phosphorylation of N-acetyl-L-glutamate.</text>
</comment>
<comment type="catalytic activity">
    <reaction evidence="1">
        <text>N-acetyl-L-glutamate + ATP = N-acetyl-L-glutamyl 5-phosphate + ADP</text>
        <dbReference type="Rhea" id="RHEA:14629"/>
        <dbReference type="ChEBI" id="CHEBI:30616"/>
        <dbReference type="ChEBI" id="CHEBI:44337"/>
        <dbReference type="ChEBI" id="CHEBI:57936"/>
        <dbReference type="ChEBI" id="CHEBI:456216"/>
        <dbReference type="EC" id="2.7.2.8"/>
    </reaction>
</comment>
<comment type="pathway">
    <text evidence="1">Amino-acid biosynthesis; L-arginine biosynthesis; N(2)-acetyl-L-ornithine from L-glutamate: step 2/4.</text>
</comment>
<comment type="subcellular location">
    <subcellularLocation>
        <location evidence="1">Cytoplasm</location>
    </subcellularLocation>
</comment>
<comment type="similarity">
    <text evidence="1">Belongs to the acetylglutamate kinase family. ArgB subfamily.</text>
</comment>
<protein>
    <recommendedName>
        <fullName evidence="1">Acetylglutamate kinase</fullName>
        <ecNumber evidence="1">2.7.2.8</ecNumber>
    </recommendedName>
    <alternativeName>
        <fullName evidence="1">N-acetyl-L-glutamate 5-phosphotransferase</fullName>
    </alternativeName>
    <alternativeName>
        <fullName evidence="1">NAG kinase</fullName>
        <shortName evidence="1">NAGK</shortName>
    </alternativeName>
</protein>
<reference key="1">
    <citation type="submission" date="2007-10" db="EMBL/GenBank/DDBJ databases">
        <title>Complete sequence of Methanococcus maripaludis C6.</title>
        <authorList>
            <consortium name="US DOE Joint Genome Institute"/>
            <person name="Copeland A."/>
            <person name="Lucas S."/>
            <person name="Lapidus A."/>
            <person name="Barry K."/>
            <person name="Glavina del Rio T."/>
            <person name="Dalin E."/>
            <person name="Tice H."/>
            <person name="Pitluck S."/>
            <person name="Clum A."/>
            <person name="Schmutz J."/>
            <person name="Larimer F."/>
            <person name="Land M."/>
            <person name="Hauser L."/>
            <person name="Kyrpides N."/>
            <person name="Mikhailova N."/>
            <person name="Sieprawska-Lupa M."/>
            <person name="Whitman W.B."/>
            <person name="Richardson P."/>
        </authorList>
    </citation>
    <scope>NUCLEOTIDE SEQUENCE [LARGE SCALE GENOMIC DNA]</scope>
    <source>
        <strain>C6 / ATCC BAA-1332</strain>
    </source>
</reference>
<proteinExistence type="inferred from homology"/>
<sequence>MEQYTKAEILIEALPYICKFHDQKFLIKYGGHAMVNEQARNWIAKDLVLLKYVGINPIVVHGGGPEINRAMEKMGKTPEFIHGLRVTDEETLEIVKMVLIGKINGDIVSKLERYGGKAVGLSGKSGQLIKAKKKIQYLMKDSQKIEIDLGMVGEVEHVDTKLIDILVEKRYIPVISPIGVDHQGNDLNLNADIAAGDIAGAMNAEKLIMVTDVDGIMDDINDQSTLHRRLTISQIEDMIEKGFITGGMIPKIEACINALDKGVQSVHIVNGKTPHAVLLEIFTEEGVGTMIVKE</sequence>
<gene>
    <name evidence="1" type="primary">argB</name>
    <name type="ordered locus">MmarC6_0887</name>
</gene>
<feature type="chain" id="PRO_1000092863" description="Acetylglutamate kinase">
    <location>
        <begin position="1"/>
        <end position="294"/>
    </location>
</feature>
<feature type="binding site" evidence="1">
    <location>
        <begin position="63"/>
        <end position="64"/>
    </location>
    <ligand>
        <name>substrate</name>
    </ligand>
</feature>
<feature type="binding site" evidence="1">
    <location>
        <position position="85"/>
    </location>
    <ligand>
        <name>substrate</name>
    </ligand>
</feature>
<feature type="binding site" evidence="1">
    <location>
        <position position="188"/>
    </location>
    <ligand>
        <name>substrate</name>
    </ligand>
</feature>
<feature type="site" description="Transition state stabilizer" evidence="1">
    <location>
        <position position="28"/>
    </location>
</feature>
<feature type="site" description="Transition state stabilizer" evidence="1">
    <location>
        <position position="251"/>
    </location>
</feature>
<dbReference type="EC" id="2.7.2.8" evidence="1"/>
<dbReference type="EMBL" id="CP000867">
    <property type="protein sequence ID" value="ABX01702.1"/>
    <property type="molecule type" value="Genomic_DNA"/>
</dbReference>
<dbReference type="SMR" id="A9A8M9"/>
<dbReference type="STRING" id="444158.MmarC6_0887"/>
<dbReference type="KEGG" id="mmx:MmarC6_0887"/>
<dbReference type="eggNOG" id="arCOG00862">
    <property type="taxonomic scope" value="Archaea"/>
</dbReference>
<dbReference type="HOGENOM" id="CLU_053680_0_0_2"/>
<dbReference type="OrthoDB" id="6816at2157"/>
<dbReference type="PhylomeDB" id="A9A8M9"/>
<dbReference type="UniPathway" id="UPA00068">
    <property type="reaction ID" value="UER00107"/>
</dbReference>
<dbReference type="GO" id="GO:0005737">
    <property type="term" value="C:cytoplasm"/>
    <property type="evidence" value="ECO:0007669"/>
    <property type="project" value="UniProtKB-SubCell"/>
</dbReference>
<dbReference type="GO" id="GO:0003991">
    <property type="term" value="F:acetylglutamate kinase activity"/>
    <property type="evidence" value="ECO:0007669"/>
    <property type="project" value="UniProtKB-UniRule"/>
</dbReference>
<dbReference type="GO" id="GO:0005524">
    <property type="term" value="F:ATP binding"/>
    <property type="evidence" value="ECO:0007669"/>
    <property type="project" value="UniProtKB-UniRule"/>
</dbReference>
<dbReference type="GO" id="GO:0042450">
    <property type="term" value="P:arginine biosynthetic process via ornithine"/>
    <property type="evidence" value="ECO:0007669"/>
    <property type="project" value="UniProtKB-UniRule"/>
</dbReference>
<dbReference type="GO" id="GO:0006526">
    <property type="term" value="P:L-arginine biosynthetic process"/>
    <property type="evidence" value="ECO:0007669"/>
    <property type="project" value="UniProtKB-UniPathway"/>
</dbReference>
<dbReference type="CDD" id="cd04250">
    <property type="entry name" value="AAK_NAGK-C"/>
    <property type="match status" value="1"/>
</dbReference>
<dbReference type="FunFam" id="3.40.1160.10:FF:000004">
    <property type="entry name" value="Acetylglutamate kinase"/>
    <property type="match status" value="1"/>
</dbReference>
<dbReference type="Gene3D" id="3.40.1160.10">
    <property type="entry name" value="Acetylglutamate kinase-like"/>
    <property type="match status" value="1"/>
</dbReference>
<dbReference type="HAMAP" id="MF_00082">
    <property type="entry name" value="ArgB"/>
    <property type="match status" value="1"/>
</dbReference>
<dbReference type="InterPro" id="IPR036393">
    <property type="entry name" value="AceGlu_kinase-like_sf"/>
</dbReference>
<dbReference type="InterPro" id="IPR004662">
    <property type="entry name" value="AcgluKinase_fam"/>
</dbReference>
<dbReference type="InterPro" id="IPR037528">
    <property type="entry name" value="ArgB"/>
</dbReference>
<dbReference type="InterPro" id="IPR001048">
    <property type="entry name" value="Asp/Glu/Uridylate_kinase"/>
</dbReference>
<dbReference type="InterPro" id="IPR001057">
    <property type="entry name" value="Glu/AcGlu_kinase"/>
</dbReference>
<dbReference type="InterPro" id="IPR041727">
    <property type="entry name" value="NAGK-C"/>
</dbReference>
<dbReference type="NCBIfam" id="TIGR00761">
    <property type="entry name" value="argB"/>
    <property type="match status" value="1"/>
</dbReference>
<dbReference type="PANTHER" id="PTHR23342">
    <property type="entry name" value="N-ACETYLGLUTAMATE SYNTHASE"/>
    <property type="match status" value="1"/>
</dbReference>
<dbReference type="PANTHER" id="PTHR23342:SF0">
    <property type="entry name" value="N-ACETYLGLUTAMATE SYNTHASE, MITOCHONDRIAL"/>
    <property type="match status" value="1"/>
</dbReference>
<dbReference type="Pfam" id="PF00696">
    <property type="entry name" value="AA_kinase"/>
    <property type="match status" value="1"/>
</dbReference>
<dbReference type="PIRSF" id="PIRSF000728">
    <property type="entry name" value="NAGK"/>
    <property type="match status" value="1"/>
</dbReference>
<dbReference type="PRINTS" id="PR00474">
    <property type="entry name" value="GLU5KINASE"/>
</dbReference>
<dbReference type="SUPFAM" id="SSF53633">
    <property type="entry name" value="Carbamate kinase-like"/>
    <property type="match status" value="1"/>
</dbReference>
<organism>
    <name type="scientific">Methanococcus maripaludis (strain C6 / ATCC BAA-1332)</name>
    <dbReference type="NCBI Taxonomy" id="444158"/>
    <lineage>
        <taxon>Archaea</taxon>
        <taxon>Methanobacteriati</taxon>
        <taxon>Methanobacteriota</taxon>
        <taxon>Methanomada group</taxon>
        <taxon>Methanococci</taxon>
        <taxon>Methanococcales</taxon>
        <taxon>Methanococcaceae</taxon>
        <taxon>Methanococcus</taxon>
    </lineage>
</organism>
<keyword id="KW-0028">Amino-acid biosynthesis</keyword>
<keyword id="KW-0055">Arginine biosynthesis</keyword>
<keyword id="KW-0067">ATP-binding</keyword>
<keyword id="KW-0963">Cytoplasm</keyword>
<keyword id="KW-0418">Kinase</keyword>
<keyword id="KW-0547">Nucleotide-binding</keyword>
<keyword id="KW-0808">Transferase</keyword>
<accession>A9A8M9</accession>